<name>ARLY_AQUCT</name>
<reference key="1">
    <citation type="journal article" date="1995" name="Biochim. Biophys. Acta">
        <title>Cloning of cDNAs encoding argininosuccinate lyase and arginase from Rana catesbeiana liver and regulation of their mRNAs during spontaneous and thyroid hormone-induced metamorphosis.</title>
        <authorList>
            <person name="Iwase K."/>
            <person name="Yamauchi K."/>
            <person name="Ishikawa K."/>
        </authorList>
    </citation>
    <scope>NUCLEOTIDE SEQUENCE [GENOMIC DNA]</scope>
    <source>
        <tissue>Liver</tissue>
    </source>
</reference>
<keyword id="KW-0028">Amino-acid biosynthesis</keyword>
<keyword id="KW-0055">Arginine biosynthesis</keyword>
<keyword id="KW-0456">Lyase</keyword>
<keyword id="KW-0835">Urea cycle</keyword>
<feature type="chain" id="PRO_0000137722" description="Argininosuccinate lyase">
    <location>
        <begin position="1"/>
        <end position="467"/>
    </location>
</feature>
<feature type="active site" description="Proton acceptor" evidence="2">
    <location>
        <position position="160"/>
    </location>
</feature>
<feature type="active site" description="Proton donor" evidence="2">
    <location>
        <position position="281"/>
    </location>
</feature>
<feature type="binding site" description="in chain A" evidence="2">
    <location>
        <position position="27"/>
    </location>
    <ligand>
        <name>2-(N(omega)-L-arginino)succinate</name>
        <dbReference type="ChEBI" id="CHEBI:57472"/>
        <note>ligand shared between tetrameric partners</note>
    </ligand>
</feature>
<feature type="binding site" description="in chain A" evidence="2">
    <location>
        <position position="114"/>
    </location>
    <ligand>
        <name>2-(N(omega)-L-arginino)succinate</name>
        <dbReference type="ChEBI" id="CHEBI:57472"/>
        <note>ligand shared between tetrameric partners</note>
    </ligand>
</feature>
<feature type="binding site" description="in chain C" evidence="2">
    <location>
        <position position="159"/>
    </location>
    <ligand>
        <name>2-(N(omega)-L-arginino)succinate</name>
        <dbReference type="ChEBI" id="CHEBI:57472"/>
        <note>ligand shared between tetrameric partners</note>
    </ligand>
</feature>
<feature type="binding site" description="in chain B" evidence="2">
    <location>
        <position position="289"/>
    </location>
    <ligand>
        <name>2-(N(omega)-L-arginino)succinate</name>
        <dbReference type="ChEBI" id="CHEBI:57472"/>
        <note>ligand shared between tetrameric partners</note>
    </ligand>
</feature>
<feature type="binding site" description="in chain A" evidence="2">
    <location>
        <position position="321"/>
    </location>
    <ligand>
        <name>2-(N(omega)-L-arginino)succinate</name>
        <dbReference type="ChEBI" id="CHEBI:57472"/>
        <note>ligand shared between tetrameric partners</note>
    </ligand>
</feature>
<feature type="binding site" description="in chain A" evidence="2">
    <location>
        <position position="326"/>
    </location>
    <ligand>
        <name>2-(N(omega)-L-arginino)succinate</name>
        <dbReference type="ChEBI" id="CHEBI:57472"/>
        <note>ligand shared between tetrameric partners</note>
    </ligand>
</feature>
<feature type="binding site" description="in chain A" evidence="2">
    <location>
        <position position="329"/>
    </location>
    <ligand>
        <name>2-(N(omega)-L-arginino)succinate</name>
        <dbReference type="ChEBI" id="CHEBI:57472"/>
        <note>ligand shared between tetrameric partners</note>
    </ligand>
</feature>
<feature type="site" description="Increases basicity of active site His" evidence="2">
    <location>
        <position position="294"/>
    </location>
</feature>
<sequence>MASEGDKLWGGRFVGSIDPIMEMFNSSVSYDQRMWSADIRGSQAYVKALEKAGLVSPTEMEHILTGLDQIHEEWSKGTFVLTKADEDIHTANERRLKELIGEPAGKLHTGRSRNDQVVTDMRLWLRDSCSALHLHLTRLIRTMVDRAAIEIDILFPGYTHMQRAQPIRWSHWILSHAVALCRDAERLGELRKRINVLPLGSGAIAGNPLGVDRELLRKELEFDSVSLNSMDATSERDFIAEFLFWASLCMTHLSKMSEDLIIYSTKEFSFVTLSDSYSTGSSLMPQKKNPDSLELIRSKAGRVFGRCSGFLMTLKGLPSTYNKDLQEDKEAMFDVYDTVCAVLQVASGVISTLQINKEGMEKALSPDMLATDIAYYLVRKGMPFRQAHGLSGKVVQLAETKGIALNKLSLEDLKSISPLFSNDVSKVWNYTNSVEQYTAAGGTAKSCVVAQVEQLRTWLKKTQESVI</sequence>
<organism>
    <name type="scientific">Aquarana catesbeiana</name>
    <name type="common">American bullfrog</name>
    <name type="synonym">Rana catesbeiana</name>
    <dbReference type="NCBI Taxonomy" id="8400"/>
    <lineage>
        <taxon>Eukaryota</taxon>
        <taxon>Metazoa</taxon>
        <taxon>Chordata</taxon>
        <taxon>Craniata</taxon>
        <taxon>Vertebrata</taxon>
        <taxon>Euteleostomi</taxon>
        <taxon>Amphibia</taxon>
        <taxon>Batrachia</taxon>
        <taxon>Anura</taxon>
        <taxon>Neobatrachia</taxon>
        <taxon>Ranoidea</taxon>
        <taxon>Ranidae</taxon>
        <taxon>Aquarana</taxon>
    </lineage>
</organism>
<accession>P51464</accession>
<dbReference type="EC" id="4.3.2.1"/>
<dbReference type="EMBL" id="D38302">
    <property type="protein sequence ID" value="BAA07421.1"/>
    <property type="molecule type" value="Genomic_DNA"/>
</dbReference>
<dbReference type="PIR" id="S52133">
    <property type="entry name" value="S52133"/>
</dbReference>
<dbReference type="SMR" id="P51464"/>
<dbReference type="UniPathway" id="UPA00068">
    <property type="reaction ID" value="UER00114"/>
</dbReference>
<dbReference type="UniPathway" id="UPA00158">
    <property type="reaction ID" value="UER00273"/>
</dbReference>
<dbReference type="GO" id="GO:0005829">
    <property type="term" value="C:cytosol"/>
    <property type="evidence" value="ECO:0007669"/>
    <property type="project" value="TreeGrafter"/>
</dbReference>
<dbReference type="GO" id="GO:0004056">
    <property type="term" value="F:argininosuccinate lyase activity"/>
    <property type="evidence" value="ECO:0007669"/>
    <property type="project" value="UniProtKB-EC"/>
</dbReference>
<dbReference type="GO" id="GO:0042450">
    <property type="term" value="P:arginine biosynthetic process via ornithine"/>
    <property type="evidence" value="ECO:0007669"/>
    <property type="project" value="InterPro"/>
</dbReference>
<dbReference type="GO" id="GO:0006526">
    <property type="term" value="P:L-arginine biosynthetic process"/>
    <property type="evidence" value="ECO:0007669"/>
    <property type="project" value="UniProtKB-UniPathway"/>
</dbReference>
<dbReference type="GO" id="GO:0000050">
    <property type="term" value="P:urea cycle"/>
    <property type="evidence" value="ECO:0007669"/>
    <property type="project" value="UniProtKB-UniPathway"/>
</dbReference>
<dbReference type="CDD" id="cd01359">
    <property type="entry name" value="Argininosuccinate_lyase"/>
    <property type="match status" value="1"/>
</dbReference>
<dbReference type="FunFam" id="1.10.40.30:FF:000001">
    <property type="entry name" value="Argininosuccinate lyase"/>
    <property type="match status" value="1"/>
</dbReference>
<dbReference type="FunFam" id="1.20.200.10:FF:000015">
    <property type="entry name" value="argininosuccinate lyase isoform X2"/>
    <property type="match status" value="2"/>
</dbReference>
<dbReference type="FunFam" id="1.10.275.10:FF:000014">
    <property type="entry name" value="Os03g0824900 protein"/>
    <property type="match status" value="1"/>
</dbReference>
<dbReference type="Gene3D" id="1.10.40.30">
    <property type="entry name" value="Fumarase/aspartase (C-terminal domain)"/>
    <property type="match status" value="1"/>
</dbReference>
<dbReference type="Gene3D" id="1.20.200.10">
    <property type="entry name" value="Fumarase/aspartase (Central domain)"/>
    <property type="match status" value="1"/>
</dbReference>
<dbReference type="Gene3D" id="1.10.275.10">
    <property type="entry name" value="Fumarase/aspartase (N-terminal domain)"/>
    <property type="match status" value="1"/>
</dbReference>
<dbReference type="HAMAP" id="MF_00006">
    <property type="entry name" value="Arg_succ_lyase"/>
    <property type="match status" value="1"/>
</dbReference>
<dbReference type="InterPro" id="IPR029419">
    <property type="entry name" value="Arg_succ_lyase_C"/>
</dbReference>
<dbReference type="InterPro" id="IPR009049">
    <property type="entry name" value="Argininosuccinate_lyase"/>
</dbReference>
<dbReference type="InterPro" id="IPR024083">
    <property type="entry name" value="Fumarase/histidase_N"/>
</dbReference>
<dbReference type="InterPro" id="IPR020557">
    <property type="entry name" value="Fumarate_lyase_CS"/>
</dbReference>
<dbReference type="InterPro" id="IPR000362">
    <property type="entry name" value="Fumarate_lyase_fam"/>
</dbReference>
<dbReference type="InterPro" id="IPR022761">
    <property type="entry name" value="Fumarate_lyase_N"/>
</dbReference>
<dbReference type="InterPro" id="IPR008948">
    <property type="entry name" value="L-Aspartase-like"/>
</dbReference>
<dbReference type="NCBIfam" id="TIGR00838">
    <property type="entry name" value="argH"/>
    <property type="match status" value="1"/>
</dbReference>
<dbReference type="PANTHER" id="PTHR43814">
    <property type="entry name" value="ARGININOSUCCINATE LYASE"/>
    <property type="match status" value="1"/>
</dbReference>
<dbReference type="PANTHER" id="PTHR43814:SF1">
    <property type="entry name" value="ARGININOSUCCINATE LYASE"/>
    <property type="match status" value="1"/>
</dbReference>
<dbReference type="Pfam" id="PF14698">
    <property type="entry name" value="ASL_C2"/>
    <property type="match status" value="1"/>
</dbReference>
<dbReference type="Pfam" id="PF00206">
    <property type="entry name" value="Lyase_1"/>
    <property type="match status" value="1"/>
</dbReference>
<dbReference type="PRINTS" id="PR00145">
    <property type="entry name" value="ARGSUCLYASE"/>
</dbReference>
<dbReference type="PRINTS" id="PR00149">
    <property type="entry name" value="FUMRATELYASE"/>
</dbReference>
<dbReference type="SUPFAM" id="SSF48557">
    <property type="entry name" value="L-aspartase-like"/>
    <property type="match status" value="1"/>
</dbReference>
<dbReference type="PROSITE" id="PS00163">
    <property type="entry name" value="FUMARATE_LYASES"/>
    <property type="match status" value="1"/>
</dbReference>
<comment type="catalytic activity">
    <reaction>
        <text>2-(N(omega)-L-arginino)succinate = fumarate + L-arginine</text>
        <dbReference type="Rhea" id="RHEA:24020"/>
        <dbReference type="ChEBI" id="CHEBI:29806"/>
        <dbReference type="ChEBI" id="CHEBI:32682"/>
        <dbReference type="ChEBI" id="CHEBI:57472"/>
        <dbReference type="EC" id="4.3.2.1"/>
    </reaction>
</comment>
<comment type="pathway">
    <text>Amino-acid biosynthesis; L-arginine biosynthesis; L-arginine from L-ornithine and carbamoyl phosphate: step 3/3.</text>
</comment>
<comment type="pathway">
    <text>Nitrogen metabolism; urea cycle; L-arginine and fumarate from (N(omega)-L-arginino)succinate: step 1/1.</text>
</comment>
<comment type="subunit">
    <text evidence="1">Homotetramer.</text>
</comment>
<comment type="similarity">
    <text evidence="3">Belongs to the lyase 1 family. Argininosuccinate lyase subfamily.</text>
</comment>
<gene>
    <name type="primary">ASL</name>
</gene>
<protein>
    <recommendedName>
        <fullName>Argininosuccinate lyase</fullName>
        <shortName>ASAL</shortName>
        <ecNumber>4.3.2.1</ecNumber>
    </recommendedName>
    <alternativeName>
        <fullName>Arginosuccinase</fullName>
    </alternativeName>
</protein>
<evidence type="ECO:0000250" key="1"/>
<evidence type="ECO:0000250" key="2">
    <source>
        <dbReference type="UniProtKB" id="P24058"/>
    </source>
</evidence>
<evidence type="ECO:0000305" key="3"/>
<proteinExistence type="inferred from homology"/>